<gene>
    <name type="primary">RPS26</name>
</gene>
<protein>
    <recommendedName>
        <fullName evidence="2">Small ribosomal subunit protein eS26</fullName>
    </recommendedName>
    <alternativeName>
        <fullName>40S ribosomal protein S26</fullName>
    </alternativeName>
</protein>
<accession>O93931</accession>
<proteinExistence type="evidence at transcript level"/>
<name>RS26_SCHCO</name>
<comment type="similarity">
    <text evidence="2">Belongs to the eukaryotic ribosomal protein eS26 family.</text>
</comment>
<keyword id="KW-0687">Ribonucleoprotein</keyword>
<keyword id="KW-0689">Ribosomal protein</keyword>
<organism>
    <name type="scientific">Schizophyllum commune</name>
    <name type="common">Split gill fungus</name>
    <dbReference type="NCBI Taxonomy" id="5334"/>
    <lineage>
        <taxon>Eukaryota</taxon>
        <taxon>Fungi</taxon>
        <taxon>Dikarya</taxon>
        <taxon>Basidiomycota</taxon>
        <taxon>Agaricomycotina</taxon>
        <taxon>Agaricomycetes</taxon>
        <taxon>Agaricomycetidae</taxon>
        <taxon>Agaricales</taxon>
        <taxon>Schizophyllaceae</taxon>
        <taxon>Schizophyllum</taxon>
    </lineage>
</organism>
<feature type="chain" id="PRO_0000204525" description="Small ribosomal subunit protein eS26">
    <location>
        <begin position="1"/>
        <end position="126"/>
    </location>
</feature>
<feature type="region of interest" description="Disordered" evidence="1">
    <location>
        <begin position="88"/>
        <end position="107"/>
    </location>
</feature>
<evidence type="ECO:0000256" key="1">
    <source>
        <dbReference type="SAM" id="MobiDB-lite"/>
    </source>
</evidence>
<evidence type="ECO:0000305" key="2"/>
<reference key="1">
    <citation type="submission" date="1998-11" db="EMBL/GenBank/DDBJ databases">
        <title>40S ribosomal protein S26 from Schizophyllum commune.</title>
        <authorList>
            <person name="Campbell C."/>
            <person name="Hummel K.M."/>
            <person name="Ramos E.R."/>
            <person name="Copeland T.K."/>
            <person name="Green A.E."/>
            <person name="Lilly W.W."/>
            <person name="Gathman A.C."/>
        </authorList>
    </citation>
    <scope>NUCLEOTIDE SEQUENCE [MRNA]</scope>
    <source>
        <strain>ATCC 44201 / CBS 340.81 / UVM 4-40 / 4-40</strain>
    </source>
</reference>
<sequence length="126" mass="14053">MTKKRRNGGRNKSGRGHVTFVRCSNCSRCVAKDKAIKRFTVRNMVESAAIRDISDASVYPEYAIPKLYIKIAYCVSCAIHSHVVRVRSREGRRNRAPPPRVRWKDGKKVNPAVAAAEDAKAAAART</sequence>
<dbReference type="EMBL" id="AF107102">
    <property type="protein sequence ID" value="AAC95384.1"/>
    <property type="molecule type" value="mRNA"/>
</dbReference>
<dbReference type="PIR" id="T50826">
    <property type="entry name" value="T50826"/>
</dbReference>
<dbReference type="SMR" id="O93931"/>
<dbReference type="VEuPathDB" id="FungiDB:SCHCODRAFT_02637870"/>
<dbReference type="OMA" id="KCYCVSC"/>
<dbReference type="GO" id="GO:0022627">
    <property type="term" value="C:cytosolic small ribosomal subunit"/>
    <property type="evidence" value="ECO:0007669"/>
    <property type="project" value="TreeGrafter"/>
</dbReference>
<dbReference type="GO" id="GO:0003729">
    <property type="term" value="F:mRNA binding"/>
    <property type="evidence" value="ECO:0007669"/>
    <property type="project" value="TreeGrafter"/>
</dbReference>
<dbReference type="GO" id="GO:0003735">
    <property type="term" value="F:structural constituent of ribosome"/>
    <property type="evidence" value="ECO:0007669"/>
    <property type="project" value="InterPro"/>
</dbReference>
<dbReference type="GO" id="GO:0006412">
    <property type="term" value="P:translation"/>
    <property type="evidence" value="ECO:0007669"/>
    <property type="project" value="InterPro"/>
</dbReference>
<dbReference type="FunFam" id="3.30.1740.20:FF:000001">
    <property type="entry name" value="40S ribosomal protein S26"/>
    <property type="match status" value="1"/>
</dbReference>
<dbReference type="Gene3D" id="3.30.1740.20">
    <property type="entry name" value="Ribosomal protein S26e"/>
    <property type="match status" value="1"/>
</dbReference>
<dbReference type="InterPro" id="IPR000892">
    <property type="entry name" value="Ribosomal_eS26"/>
</dbReference>
<dbReference type="InterPro" id="IPR047864">
    <property type="entry name" value="Ribosomal_eS26_CS"/>
</dbReference>
<dbReference type="InterPro" id="IPR038551">
    <property type="entry name" value="Ribosomal_eS26_sf"/>
</dbReference>
<dbReference type="PANTHER" id="PTHR12538">
    <property type="entry name" value="40S RIBOSOMAL PROTEIN S26"/>
    <property type="match status" value="1"/>
</dbReference>
<dbReference type="PANTHER" id="PTHR12538:SF0">
    <property type="entry name" value="40S RIBOSOMAL PROTEIN S26"/>
    <property type="match status" value="1"/>
</dbReference>
<dbReference type="Pfam" id="PF01283">
    <property type="entry name" value="Ribosomal_S26e"/>
    <property type="match status" value="1"/>
</dbReference>
<dbReference type="PROSITE" id="PS00733">
    <property type="entry name" value="RIBOSOMAL_S26E"/>
    <property type="match status" value="1"/>
</dbReference>